<proteinExistence type="inferred from homology"/>
<organism>
    <name type="scientific">Cuscuta reflexa</name>
    <name type="common">Southern Asian dodder</name>
    <dbReference type="NCBI Taxonomy" id="4129"/>
    <lineage>
        <taxon>Eukaryota</taxon>
        <taxon>Viridiplantae</taxon>
        <taxon>Streptophyta</taxon>
        <taxon>Embryophyta</taxon>
        <taxon>Tracheophyta</taxon>
        <taxon>Spermatophyta</taxon>
        <taxon>Magnoliopsida</taxon>
        <taxon>eudicotyledons</taxon>
        <taxon>Gunneridae</taxon>
        <taxon>Pentapetalae</taxon>
        <taxon>asterids</taxon>
        <taxon>lamiids</taxon>
        <taxon>Solanales</taxon>
        <taxon>Convolvulaceae</taxon>
        <taxon>Cuscuteae</taxon>
        <taxon>Cuscuta</taxon>
        <taxon>Cuscuta subgen. Monogynella</taxon>
    </lineage>
</organism>
<geneLocation type="plastid"/>
<comment type="function">
    <text evidence="1">This protein binds specifically to 23S rRNA.</text>
</comment>
<comment type="function">
    <text evidence="1">The globular domain of the protein is located near the polypeptide exit tunnel on the outside of the subunit, while an extended beta-hairpin is found that lines the wall of the exit tunnel in the center of the 70S ribosome.</text>
</comment>
<comment type="subunit">
    <text evidence="1">Part of the 50S ribosomal subunit.</text>
</comment>
<comment type="subcellular location">
    <subcellularLocation>
        <location>Plastid</location>
    </subcellularLocation>
</comment>
<comment type="similarity">
    <text evidence="2">Belongs to the universal ribosomal protein uL22 family.</text>
</comment>
<comment type="caution">
    <text evidence="2">Young tissue from this organism is photosynthetic and contains some thylakoids, although the photosynthetic activity does not exceed the light compensation point.</text>
</comment>
<protein>
    <recommendedName>
        <fullName evidence="2">Large ribosomal subunit protein uL22c</fullName>
    </recommendedName>
    <alternativeName>
        <fullName>50S ribosomal protein L22, plastid</fullName>
    </alternativeName>
</protein>
<keyword id="KW-0934">Plastid</keyword>
<keyword id="KW-0687">Ribonucleoprotein</keyword>
<keyword id="KW-0689">Ribosomal protein</keyword>
<keyword id="KW-0694">RNA-binding</keyword>
<keyword id="KW-0699">rRNA-binding</keyword>
<evidence type="ECO:0000250" key="1"/>
<evidence type="ECO:0000305" key="2"/>
<gene>
    <name type="primary">rpl22</name>
</gene>
<accession>A7M9A2</accession>
<feature type="chain" id="PRO_0000354570" description="Large ribosomal subunit protein uL22c">
    <location>
        <begin position="1"/>
        <end position="135"/>
    </location>
</feature>
<reference key="1">
    <citation type="journal article" date="2007" name="BMC Plant Biol.">
        <title>Complete DNA sequences of the plastid genomes of two parasitic flowering plant species, Cuscuta reflexa and Cuscuta gronovii.</title>
        <authorList>
            <person name="Funk H.T."/>
            <person name="Berg S."/>
            <person name="Krupinska K."/>
            <person name="Maier U.-G."/>
            <person name="Krause K."/>
        </authorList>
    </citation>
    <scope>NUCLEOTIDE SEQUENCE [LARGE SCALE GENOMIC DNA]</scope>
</reference>
<name>RK22_CUSRE</name>
<dbReference type="EMBL" id="AM711640">
    <property type="protein sequence ID" value="CAM98430.1"/>
    <property type="molecule type" value="Genomic_DNA"/>
</dbReference>
<dbReference type="RefSeq" id="YP_001430143.1">
    <property type="nucleotide sequence ID" value="NC_009766.1"/>
</dbReference>
<dbReference type="SMR" id="A7M9A2"/>
<dbReference type="GeneID" id="5536634"/>
<dbReference type="GO" id="GO:0015934">
    <property type="term" value="C:large ribosomal subunit"/>
    <property type="evidence" value="ECO:0007669"/>
    <property type="project" value="InterPro"/>
</dbReference>
<dbReference type="GO" id="GO:0009536">
    <property type="term" value="C:plastid"/>
    <property type="evidence" value="ECO:0007669"/>
    <property type="project" value="UniProtKB-SubCell"/>
</dbReference>
<dbReference type="GO" id="GO:0019843">
    <property type="term" value="F:rRNA binding"/>
    <property type="evidence" value="ECO:0007669"/>
    <property type="project" value="UniProtKB-KW"/>
</dbReference>
<dbReference type="GO" id="GO:0003735">
    <property type="term" value="F:structural constituent of ribosome"/>
    <property type="evidence" value="ECO:0007669"/>
    <property type="project" value="InterPro"/>
</dbReference>
<dbReference type="GO" id="GO:0006412">
    <property type="term" value="P:translation"/>
    <property type="evidence" value="ECO:0007669"/>
    <property type="project" value="InterPro"/>
</dbReference>
<dbReference type="CDD" id="cd00336">
    <property type="entry name" value="Ribosomal_L22"/>
    <property type="match status" value="1"/>
</dbReference>
<dbReference type="FunFam" id="3.90.470.10:FF:000006">
    <property type="entry name" value="50S ribosomal protein L22, chloroplastic"/>
    <property type="match status" value="1"/>
</dbReference>
<dbReference type="Gene3D" id="3.90.470.10">
    <property type="entry name" value="Ribosomal protein L22/L17"/>
    <property type="match status" value="1"/>
</dbReference>
<dbReference type="HAMAP" id="MF_01331_B">
    <property type="entry name" value="Ribosomal_uL22_B"/>
    <property type="match status" value="1"/>
</dbReference>
<dbReference type="InterPro" id="IPR001063">
    <property type="entry name" value="Ribosomal_uL22"/>
</dbReference>
<dbReference type="InterPro" id="IPR005727">
    <property type="entry name" value="Ribosomal_uL22_bac/chlpt-type"/>
</dbReference>
<dbReference type="InterPro" id="IPR047867">
    <property type="entry name" value="Ribosomal_uL22_bac/org-type"/>
</dbReference>
<dbReference type="InterPro" id="IPR018260">
    <property type="entry name" value="Ribosomal_uL22_CS"/>
</dbReference>
<dbReference type="InterPro" id="IPR036394">
    <property type="entry name" value="Ribosomal_uL22_sf"/>
</dbReference>
<dbReference type="NCBIfam" id="TIGR01044">
    <property type="entry name" value="rplV_bact"/>
    <property type="match status" value="1"/>
</dbReference>
<dbReference type="PANTHER" id="PTHR13501">
    <property type="entry name" value="CHLOROPLAST 50S RIBOSOMAL PROTEIN L22-RELATED"/>
    <property type="match status" value="1"/>
</dbReference>
<dbReference type="PANTHER" id="PTHR13501:SF10">
    <property type="entry name" value="LARGE RIBOSOMAL SUBUNIT PROTEIN UL22M"/>
    <property type="match status" value="1"/>
</dbReference>
<dbReference type="Pfam" id="PF00237">
    <property type="entry name" value="Ribosomal_L22"/>
    <property type="match status" value="1"/>
</dbReference>
<dbReference type="SUPFAM" id="SSF54843">
    <property type="entry name" value="Ribosomal protein L22"/>
    <property type="match status" value="1"/>
</dbReference>
<dbReference type="PROSITE" id="PS00464">
    <property type="entry name" value="RIBOSOMAL_L22"/>
    <property type="match status" value="1"/>
</dbReference>
<sequence>MRKTKAPEIYALGQHISMSADKARRVIDQIRGRSYEETLMILELMPYRAAYPILKLVYSAASNASYTLDSNEANLFISKAEVNQGPAIKKLKPRARGRSYPIKRPTCHITILLKDISFYDSDSESVELNLLKKAR</sequence>